<comment type="function">
    <text evidence="1">Catalyzes the NADPH-dependent reduction of N-acetyl-5-glutamyl phosphate to yield N-acetyl-L-glutamate 5-semialdehyde.</text>
</comment>
<comment type="catalytic activity">
    <reaction evidence="1">
        <text>N-acetyl-L-glutamate 5-semialdehyde + phosphate + NADP(+) = N-acetyl-L-glutamyl 5-phosphate + NADPH + H(+)</text>
        <dbReference type="Rhea" id="RHEA:21588"/>
        <dbReference type="ChEBI" id="CHEBI:15378"/>
        <dbReference type="ChEBI" id="CHEBI:29123"/>
        <dbReference type="ChEBI" id="CHEBI:43474"/>
        <dbReference type="ChEBI" id="CHEBI:57783"/>
        <dbReference type="ChEBI" id="CHEBI:57936"/>
        <dbReference type="ChEBI" id="CHEBI:58349"/>
        <dbReference type="EC" id="1.2.1.38"/>
    </reaction>
</comment>
<comment type="pathway">
    <text evidence="1">Amino-acid biosynthesis; L-arginine biosynthesis; N(2)-acetyl-L-ornithine from L-glutamate: step 3/4.</text>
</comment>
<comment type="subcellular location">
    <subcellularLocation>
        <location evidence="1">Cytoplasm</location>
    </subcellularLocation>
</comment>
<comment type="similarity">
    <text evidence="1">Belongs to the NAGSA dehydrogenase family. Type 1 subfamily.</text>
</comment>
<organism>
    <name type="scientific">Leptospira interrogans serogroup Icterohaemorrhagiae serovar copenhageni (strain Fiocruz L1-130)</name>
    <dbReference type="NCBI Taxonomy" id="267671"/>
    <lineage>
        <taxon>Bacteria</taxon>
        <taxon>Pseudomonadati</taxon>
        <taxon>Spirochaetota</taxon>
        <taxon>Spirochaetia</taxon>
        <taxon>Leptospirales</taxon>
        <taxon>Leptospiraceae</taxon>
        <taxon>Leptospira</taxon>
    </lineage>
</organism>
<evidence type="ECO:0000255" key="1">
    <source>
        <dbReference type="HAMAP-Rule" id="MF_00150"/>
    </source>
</evidence>
<accession>Q72RJ9</accession>
<keyword id="KW-0028">Amino-acid biosynthesis</keyword>
<keyword id="KW-0055">Arginine biosynthesis</keyword>
<keyword id="KW-0963">Cytoplasm</keyword>
<keyword id="KW-0521">NADP</keyword>
<keyword id="KW-0560">Oxidoreductase</keyword>
<name>ARGC_LEPIC</name>
<gene>
    <name evidence="1" type="primary">argC</name>
    <name type="ordered locus">LIC_11746</name>
</gene>
<protein>
    <recommendedName>
        <fullName evidence="1">N-acetyl-gamma-glutamyl-phosphate reductase</fullName>
        <shortName evidence="1">AGPR</shortName>
        <ecNumber evidence="1">1.2.1.38</ecNumber>
    </recommendedName>
    <alternativeName>
        <fullName evidence="1">N-acetyl-glutamate semialdehyde dehydrogenase</fullName>
        <shortName evidence="1">NAGSA dehydrogenase</shortName>
    </alternativeName>
</protein>
<sequence>MAEISILGAGGLTGKELLLLFSRQKEHEVVHITSDKLAGKTISEVFPEVSFPKNLVFKKHEDIVPLKSLVVLAVPNEVSVESAPKFLDAGHKVIDLSGVYRLHNQEILEKYYKLKHTRFNYINRAVFGIPEIFRDQLKNADFVSNPGCFSTSVILPIFLLGQLRKNLRPRIIVDSKSGVSGAGGRTEDSGYSYTSVYENFRAYKILSHQHEPEIREYVYSKSGLSDPEVIFTPHLLPVYRGILSTIVLEFDSEPEQDLISILENSSLNEPFIRILKTPEEIELKKVQHTNFLDISLRKRGNTLVVVSALDNLVKGAAGQALQNINLMTGAKETLGLLP</sequence>
<dbReference type="EC" id="1.2.1.38" evidence="1"/>
<dbReference type="EMBL" id="AE016823">
    <property type="protein sequence ID" value="AAS70335.1"/>
    <property type="molecule type" value="Genomic_DNA"/>
</dbReference>
<dbReference type="RefSeq" id="WP_000808030.1">
    <property type="nucleotide sequence ID" value="NC_005823.1"/>
</dbReference>
<dbReference type="SMR" id="Q72RJ9"/>
<dbReference type="GeneID" id="61141644"/>
<dbReference type="KEGG" id="lic:LIC_11746"/>
<dbReference type="HOGENOM" id="CLU_006384_0_1_12"/>
<dbReference type="UniPathway" id="UPA00068">
    <property type="reaction ID" value="UER00108"/>
</dbReference>
<dbReference type="Proteomes" id="UP000007037">
    <property type="component" value="Chromosome I"/>
</dbReference>
<dbReference type="GO" id="GO:0005737">
    <property type="term" value="C:cytoplasm"/>
    <property type="evidence" value="ECO:0007669"/>
    <property type="project" value="UniProtKB-SubCell"/>
</dbReference>
<dbReference type="GO" id="GO:0003942">
    <property type="term" value="F:N-acetyl-gamma-glutamyl-phosphate reductase activity"/>
    <property type="evidence" value="ECO:0007669"/>
    <property type="project" value="UniProtKB-UniRule"/>
</dbReference>
<dbReference type="GO" id="GO:0051287">
    <property type="term" value="F:NAD binding"/>
    <property type="evidence" value="ECO:0007669"/>
    <property type="project" value="InterPro"/>
</dbReference>
<dbReference type="GO" id="GO:0070401">
    <property type="term" value="F:NADP+ binding"/>
    <property type="evidence" value="ECO:0007669"/>
    <property type="project" value="InterPro"/>
</dbReference>
<dbReference type="GO" id="GO:0006526">
    <property type="term" value="P:L-arginine biosynthetic process"/>
    <property type="evidence" value="ECO:0007669"/>
    <property type="project" value="UniProtKB-UniRule"/>
</dbReference>
<dbReference type="CDD" id="cd23934">
    <property type="entry name" value="AGPR_1_C"/>
    <property type="match status" value="1"/>
</dbReference>
<dbReference type="CDD" id="cd17895">
    <property type="entry name" value="AGPR_1_N"/>
    <property type="match status" value="1"/>
</dbReference>
<dbReference type="Gene3D" id="3.30.360.10">
    <property type="entry name" value="Dihydrodipicolinate Reductase, domain 2"/>
    <property type="match status" value="1"/>
</dbReference>
<dbReference type="Gene3D" id="3.40.50.720">
    <property type="entry name" value="NAD(P)-binding Rossmann-like Domain"/>
    <property type="match status" value="1"/>
</dbReference>
<dbReference type="HAMAP" id="MF_00150">
    <property type="entry name" value="ArgC_type1"/>
    <property type="match status" value="1"/>
</dbReference>
<dbReference type="InterPro" id="IPR023013">
    <property type="entry name" value="AGPR_AS"/>
</dbReference>
<dbReference type="InterPro" id="IPR000706">
    <property type="entry name" value="AGPR_type-1"/>
</dbReference>
<dbReference type="InterPro" id="IPR036291">
    <property type="entry name" value="NAD(P)-bd_dom_sf"/>
</dbReference>
<dbReference type="InterPro" id="IPR050085">
    <property type="entry name" value="NAGSA_dehydrogenase"/>
</dbReference>
<dbReference type="InterPro" id="IPR000534">
    <property type="entry name" value="Semialdehyde_DH_NAD-bd"/>
</dbReference>
<dbReference type="NCBIfam" id="TIGR01850">
    <property type="entry name" value="argC"/>
    <property type="match status" value="1"/>
</dbReference>
<dbReference type="PANTHER" id="PTHR32338:SF10">
    <property type="entry name" value="N-ACETYL-GAMMA-GLUTAMYL-PHOSPHATE REDUCTASE, CHLOROPLASTIC-RELATED"/>
    <property type="match status" value="1"/>
</dbReference>
<dbReference type="PANTHER" id="PTHR32338">
    <property type="entry name" value="N-ACETYL-GAMMA-GLUTAMYL-PHOSPHATE REDUCTASE, CHLOROPLASTIC-RELATED-RELATED"/>
    <property type="match status" value="1"/>
</dbReference>
<dbReference type="Pfam" id="PF01118">
    <property type="entry name" value="Semialdhyde_dh"/>
    <property type="match status" value="1"/>
</dbReference>
<dbReference type="Pfam" id="PF22698">
    <property type="entry name" value="Semialdhyde_dhC_1"/>
    <property type="match status" value="1"/>
</dbReference>
<dbReference type="SMART" id="SM00859">
    <property type="entry name" value="Semialdhyde_dh"/>
    <property type="match status" value="1"/>
</dbReference>
<dbReference type="SUPFAM" id="SSF55347">
    <property type="entry name" value="Glyceraldehyde-3-phosphate dehydrogenase-like, C-terminal domain"/>
    <property type="match status" value="1"/>
</dbReference>
<dbReference type="SUPFAM" id="SSF51735">
    <property type="entry name" value="NAD(P)-binding Rossmann-fold domains"/>
    <property type="match status" value="1"/>
</dbReference>
<dbReference type="PROSITE" id="PS01224">
    <property type="entry name" value="ARGC"/>
    <property type="match status" value="1"/>
</dbReference>
<feature type="chain" id="PRO_0000112415" description="N-acetyl-gamma-glutamyl-phosphate reductase">
    <location>
        <begin position="1"/>
        <end position="338"/>
    </location>
</feature>
<feature type="active site" evidence="1">
    <location>
        <position position="148"/>
    </location>
</feature>
<reference key="1">
    <citation type="journal article" date="2004" name="J. Bacteriol.">
        <title>Comparative genomics of two Leptospira interrogans serovars reveals novel insights into physiology and pathogenesis.</title>
        <authorList>
            <person name="Nascimento A.L.T.O."/>
            <person name="Ko A.I."/>
            <person name="Martins E.A.L."/>
            <person name="Monteiro-Vitorello C.B."/>
            <person name="Ho P.L."/>
            <person name="Haake D.A."/>
            <person name="Verjovski-Almeida S."/>
            <person name="Hartskeerl R.A."/>
            <person name="Marques M.V."/>
            <person name="Oliveira M.C."/>
            <person name="Menck C.F.M."/>
            <person name="Leite L.C.C."/>
            <person name="Carrer H."/>
            <person name="Coutinho L.L."/>
            <person name="Degrave W.M."/>
            <person name="Dellagostin O.A."/>
            <person name="El-Dorry H."/>
            <person name="Ferro E.S."/>
            <person name="Ferro M.I.T."/>
            <person name="Furlan L.R."/>
            <person name="Gamberini M."/>
            <person name="Giglioti E.A."/>
            <person name="Goes-Neto A."/>
            <person name="Goldman G.H."/>
            <person name="Goldman M.H.S."/>
            <person name="Harakava R."/>
            <person name="Jeronimo S.M.B."/>
            <person name="Junqueira-de-Azevedo I.L.M."/>
            <person name="Kimura E.T."/>
            <person name="Kuramae E.E."/>
            <person name="Lemos E.G.M."/>
            <person name="Lemos M.V.F."/>
            <person name="Marino C.L."/>
            <person name="Nunes L.R."/>
            <person name="de Oliveira R.C."/>
            <person name="Pereira G.G."/>
            <person name="Reis M.S."/>
            <person name="Schriefer A."/>
            <person name="Siqueira W.J."/>
            <person name="Sommer P."/>
            <person name="Tsai S.M."/>
            <person name="Simpson A.J.G."/>
            <person name="Ferro J.A."/>
            <person name="Camargo L.E.A."/>
            <person name="Kitajima J.P."/>
            <person name="Setubal J.C."/>
            <person name="Van Sluys M.A."/>
        </authorList>
    </citation>
    <scope>NUCLEOTIDE SEQUENCE [LARGE SCALE GENOMIC DNA]</scope>
    <source>
        <strain>Fiocruz L1-130</strain>
    </source>
</reference>
<proteinExistence type="inferred from homology"/>